<reference key="1">
    <citation type="journal article" date="2007" name="Environ. Microbiol.">
        <title>Whole-genome analysis of the ammonia-oxidizing bacterium, Nitrosomonas eutropha C91: implications for niche adaptation.</title>
        <authorList>
            <person name="Stein L.Y."/>
            <person name="Arp D.J."/>
            <person name="Berube P.M."/>
            <person name="Chain P.S."/>
            <person name="Hauser L."/>
            <person name="Jetten M.S."/>
            <person name="Klotz M.G."/>
            <person name="Larimer F.W."/>
            <person name="Norton J.M."/>
            <person name="Op den Camp H.J.M."/>
            <person name="Shin M."/>
            <person name="Wei X."/>
        </authorList>
    </citation>
    <scope>NUCLEOTIDE SEQUENCE [LARGE SCALE GENOMIC DNA]</scope>
    <source>
        <strain>DSM 101675 / C91 / Nm57</strain>
    </source>
</reference>
<comment type="function">
    <text evidence="1">Involved in the regulation of the intracellular balance of NAD and NADP, and is a key enzyme in the biosynthesis of NADP. Catalyzes specifically the phosphorylation on 2'-hydroxyl of the adenosine moiety of NAD to yield NADP.</text>
</comment>
<comment type="catalytic activity">
    <reaction evidence="1">
        <text>NAD(+) + ATP = ADP + NADP(+) + H(+)</text>
        <dbReference type="Rhea" id="RHEA:18629"/>
        <dbReference type="ChEBI" id="CHEBI:15378"/>
        <dbReference type="ChEBI" id="CHEBI:30616"/>
        <dbReference type="ChEBI" id="CHEBI:57540"/>
        <dbReference type="ChEBI" id="CHEBI:58349"/>
        <dbReference type="ChEBI" id="CHEBI:456216"/>
        <dbReference type="EC" id="2.7.1.23"/>
    </reaction>
</comment>
<comment type="cofactor">
    <cofactor evidence="1">
        <name>a divalent metal cation</name>
        <dbReference type="ChEBI" id="CHEBI:60240"/>
    </cofactor>
</comment>
<comment type="subcellular location">
    <subcellularLocation>
        <location evidence="1">Cytoplasm</location>
    </subcellularLocation>
</comment>
<comment type="similarity">
    <text evidence="1">Belongs to the NAD kinase family.</text>
</comment>
<proteinExistence type="inferred from homology"/>
<gene>
    <name evidence="1" type="primary">nadK</name>
    <name type="ordered locus">Neut_0768</name>
</gene>
<sequence length="296" mass="32706">MGSTLFKTIALIGKHKNPDIMTPLLNLAEYLTDRGTSVVLDDLTAAHIGKNQYPVVALEEIGRQADLAIVLGGDGTMLNIARTLVPFSVPLIGINQGRLGFLTDLTVDTMYATLNDMLAGQFIVENRMLLTTEVTRHGESVFKELAFNDVVLHRGISSGMIELEVHINGEYVYSLRSDGLIIATPTGSTAYALSSGGPILHPGLNLMILVPVCPHTLSNRPIVIGADAVIEIKIHYTTETKIYTDSHSWFDLGEHDRVLVRRCPETIKLLHPVHHSYYRMLREKLGWSSILQKNSR</sequence>
<organism>
    <name type="scientific">Nitrosomonas eutropha (strain DSM 101675 / C91 / Nm57)</name>
    <dbReference type="NCBI Taxonomy" id="335283"/>
    <lineage>
        <taxon>Bacteria</taxon>
        <taxon>Pseudomonadati</taxon>
        <taxon>Pseudomonadota</taxon>
        <taxon>Betaproteobacteria</taxon>
        <taxon>Nitrosomonadales</taxon>
        <taxon>Nitrosomonadaceae</taxon>
        <taxon>Nitrosomonas</taxon>
    </lineage>
</organism>
<protein>
    <recommendedName>
        <fullName evidence="1">NAD kinase</fullName>
        <ecNumber evidence="1">2.7.1.23</ecNumber>
    </recommendedName>
    <alternativeName>
        <fullName evidence="1">ATP-dependent NAD kinase</fullName>
    </alternativeName>
</protein>
<evidence type="ECO:0000255" key="1">
    <source>
        <dbReference type="HAMAP-Rule" id="MF_00361"/>
    </source>
</evidence>
<dbReference type="EC" id="2.7.1.23" evidence="1"/>
<dbReference type="EMBL" id="CP000450">
    <property type="protein sequence ID" value="ABI59038.1"/>
    <property type="molecule type" value="Genomic_DNA"/>
</dbReference>
<dbReference type="RefSeq" id="WP_011633863.1">
    <property type="nucleotide sequence ID" value="NC_008344.1"/>
</dbReference>
<dbReference type="SMR" id="Q0AHZ4"/>
<dbReference type="STRING" id="335283.Neut_0768"/>
<dbReference type="KEGG" id="net:Neut_0768"/>
<dbReference type="eggNOG" id="COG0061">
    <property type="taxonomic scope" value="Bacteria"/>
</dbReference>
<dbReference type="HOGENOM" id="CLU_008831_0_1_4"/>
<dbReference type="OrthoDB" id="9774737at2"/>
<dbReference type="Proteomes" id="UP000001966">
    <property type="component" value="Chromosome"/>
</dbReference>
<dbReference type="GO" id="GO:0005737">
    <property type="term" value="C:cytoplasm"/>
    <property type="evidence" value="ECO:0007669"/>
    <property type="project" value="UniProtKB-SubCell"/>
</dbReference>
<dbReference type="GO" id="GO:0005524">
    <property type="term" value="F:ATP binding"/>
    <property type="evidence" value="ECO:0007669"/>
    <property type="project" value="UniProtKB-KW"/>
</dbReference>
<dbReference type="GO" id="GO:0046872">
    <property type="term" value="F:metal ion binding"/>
    <property type="evidence" value="ECO:0007669"/>
    <property type="project" value="UniProtKB-UniRule"/>
</dbReference>
<dbReference type="GO" id="GO:0051287">
    <property type="term" value="F:NAD binding"/>
    <property type="evidence" value="ECO:0007669"/>
    <property type="project" value="UniProtKB-ARBA"/>
</dbReference>
<dbReference type="GO" id="GO:0003951">
    <property type="term" value="F:NAD+ kinase activity"/>
    <property type="evidence" value="ECO:0007669"/>
    <property type="project" value="UniProtKB-UniRule"/>
</dbReference>
<dbReference type="GO" id="GO:0019674">
    <property type="term" value="P:NAD metabolic process"/>
    <property type="evidence" value="ECO:0007669"/>
    <property type="project" value="InterPro"/>
</dbReference>
<dbReference type="GO" id="GO:0006741">
    <property type="term" value="P:NADP biosynthetic process"/>
    <property type="evidence" value="ECO:0007669"/>
    <property type="project" value="UniProtKB-UniRule"/>
</dbReference>
<dbReference type="Gene3D" id="3.40.50.10330">
    <property type="entry name" value="Probable inorganic polyphosphate/atp-NAD kinase, domain 1"/>
    <property type="match status" value="1"/>
</dbReference>
<dbReference type="Gene3D" id="2.60.200.30">
    <property type="entry name" value="Probable inorganic polyphosphate/atp-NAD kinase, domain 2"/>
    <property type="match status" value="1"/>
</dbReference>
<dbReference type="HAMAP" id="MF_00361">
    <property type="entry name" value="NAD_kinase"/>
    <property type="match status" value="1"/>
</dbReference>
<dbReference type="InterPro" id="IPR017438">
    <property type="entry name" value="ATP-NAD_kinase_N"/>
</dbReference>
<dbReference type="InterPro" id="IPR017437">
    <property type="entry name" value="ATP-NAD_kinase_PpnK-typ_C"/>
</dbReference>
<dbReference type="InterPro" id="IPR016064">
    <property type="entry name" value="NAD/diacylglycerol_kinase_sf"/>
</dbReference>
<dbReference type="InterPro" id="IPR002504">
    <property type="entry name" value="NADK"/>
</dbReference>
<dbReference type="NCBIfam" id="NF002306">
    <property type="entry name" value="PRK01231.1"/>
    <property type="match status" value="1"/>
</dbReference>
<dbReference type="NCBIfam" id="NF002561">
    <property type="entry name" value="PRK02155.1"/>
    <property type="match status" value="1"/>
</dbReference>
<dbReference type="PANTHER" id="PTHR20275">
    <property type="entry name" value="NAD KINASE"/>
    <property type="match status" value="1"/>
</dbReference>
<dbReference type="PANTHER" id="PTHR20275:SF0">
    <property type="entry name" value="NAD KINASE"/>
    <property type="match status" value="1"/>
</dbReference>
<dbReference type="Pfam" id="PF01513">
    <property type="entry name" value="NAD_kinase"/>
    <property type="match status" value="1"/>
</dbReference>
<dbReference type="Pfam" id="PF20143">
    <property type="entry name" value="NAD_kinase_C"/>
    <property type="match status" value="1"/>
</dbReference>
<dbReference type="SUPFAM" id="SSF111331">
    <property type="entry name" value="NAD kinase/diacylglycerol kinase-like"/>
    <property type="match status" value="1"/>
</dbReference>
<keyword id="KW-0067">ATP-binding</keyword>
<keyword id="KW-0963">Cytoplasm</keyword>
<keyword id="KW-0418">Kinase</keyword>
<keyword id="KW-0520">NAD</keyword>
<keyword id="KW-0521">NADP</keyword>
<keyword id="KW-0547">Nucleotide-binding</keyword>
<keyword id="KW-0808">Transferase</keyword>
<feature type="chain" id="PRO_1000005425" description="NAD kinase">
    <location>
        <begin position="1"/>
        <end position="296"/>
    </location>
</feature>
<feature type="active site" description="Proton acceptor" evidence="1">
    <location>
        <position position="74"/>
    </location>
</feature>
<feature type="binding site" evidence="1">
    <location>
        <begin position="74"/>
        <end position="75"/>
    </location>
    <ligand>
        <name>NAD(+)</name>
        <dbReference type="ChEBI" id="CHEBI:57540"/>
    </ligand>
</feature>
<feature type="binding site" evidence="1">
    <location>
        <begin position="148"/>
        <end position="149"/>
    </location>
    <ligand>
        <name>NAD(+)</name>
        <dbReference type="ChEBI" id="CHEBI:57540"/>
    </ligand>
</feature>
<feature type="binding site" evidence="1">
    <location>
        <position position="176"/>
    </location>
    <ligand>
        <name>NAD(+)</name>
        <dbReference type="ChEBI" id="CHEBI:57540"/>
    </ligand>
</feature>
<feature type="binding site" evidence="1">
    <location>
        <position position="178"/>
    </location>
    <ligand>
        <name>NAD(+)</name>
        <dbReference type="ChEBI" id="CHEBI:57540"/>
    </ligand>
</feature>
<feature type="binding site" evidence="1">
    <location>
        <begin position="189"/>
        <end position="194"/>
    </location>
    <ligand>
        <name>NAD(+)</name>
        <dbReference type="ChEBI" id="CHEBI:57540"/>
    </ligand>
</feature>
<name>NADK_NITEC</name>
<accession>Q0AHZ4</accession>